<accession>Q165Y3</accession>
<name>RL27_ROSDO</name>
<sequence>MAHKKAGGSSRNGRDSAGRRLGVKKYGGEAVIPGNIIVRQRGTKFWPAAGVGMGKDHTIFATVDGAVTFHKGLKNRTFISVLPVAEAAE</sequence>
<feature type="chain" id="PRO_1000017588" description="Large ribosomal subunit protein bL27">
    <location>
        <begin position="1"/>
        <end position="89"/>
    </location>
</feature>
<feature type="region of interest" description="Disordered" evidence="2">
    <location>
        <begin position="1"/>
        <end position="21"/>
    </location>
</feature>
<evidence type="ECO:0000255" key="1">
    <source>
        <dbReference type="HAMAP-Rule" id="MF_00539"/>
    </source>
</evidence>
<evidence type="ECO:0000256" key="2">
    <source>
        <dbReference type="SAM" id="MobiDB-lite"/>
    </source>
</evidence>
<evidence type="ECO:0000305" key="3"/>
<proteinExistence type="inferred from homology"/>
<gene>
    <name evidence="1" type="primary">rpmA</name>
    <name type="ordered locus">RD1_2663</name>
</gene>
<reference key="1">
    <citation type="journal article" date="2007" name="J. Bacteriol.">
        <title>The complete genome sequence of Roseobacter denitrificans reveals a mixotrophic rather than photosynthetic metabolism.</title>
        <authorList>
            <person name="Swingley W.D."/>
            <person name="Sadekar S."/>
            <person name="Mastrian S.D."/>
            <person name="Matthies H.J."/>
            <person name="Hao J."/>
            <person name="Ramos H."/>
            <person name="Acharya C.R."/>
            <person name="Conrad A.L."/>
            <person name="Taylor H.L."/>
            <person name="Dejesa L.C."/>
            <person name="Shah M.K."/>
            <person name="O'Huallachain M.E."/>
            <person name="Lince M.T."/>
            <person name="Blankenship R.E."/>
            <person name="Beatty J.T."/>
            <person name="Touchman J.W."/>
        </authorList>
    </citation>
    <scope>NUCLEOTIDE SEQUENCE [LARGE SCALE GENOMIC DNA]</scope>
    <source>
        <strain>ATCC 33942 / OCh 114</strain>
    </source>
</reference>
<comment type="similarity">
    <text evidence="1">Belongs to the bacterial ribosomal protein bL27 family.</text>
</comment>
<protein>
    <recommendedName>
        <fullName evidence="1">Large ribosomal subunit protein bL27</fullName>
    </recommendedName>
    <alternativeName>
        <fullName evidence="3">50S ribosomal protein L27</fullName>
    </alternativeName>
</protein>
<organism>
    <name type="scientific">Roseobacter denitrificans (strain ATCC 33942 / OCh 114)</name>
    <name type="common">Erythrobacter sp. (strain OCh 114)</name>
    <name type="synonym">Roseobacter denitrificans</name>
    <dbReference type="NCBI Taxonomy" id="375451"/>
    <lineage>
        <taxon>Bacteria</taxon>
        <taxon>Pseudomonadati</taxon>
        <taxon>Pseudomonadota</taxon>
        <taxon>Alphaproteobacteria</taxon>
        <taxon>Rhodobacterales</taxon>
        <taxon>Roseobacteraceae</taxon>
        <taxon>Roseobacter</taxon>
    </lineage>
</organism>
<dbReference type="EMBL" id="CP000362">
    <property type="protein sequence ID" value="ABG32210.1"/>
    <property type="molecule type" value="Genomic_DNA"/>
</dbReference>
<dbReference type="RefSeq" id="WP_011568827.1">
    <property type="nucleotide sequence ID" value="NZ_FOOO01000002.1"/>
</dbReference>
<dbReference type="SMR" id="Q165Y3"/>
<dbReference type="STRING" id="375451.RD1_2663"/>
<dbReference type="KEGG" id="rde:RD1_2663"/>
<dbReference type="eggNOG" id="COG0211">
    <property type="taxonomic scope" value="Bacteria"/>
</dbReference>
<dbReference type="HOGENOM" id="CLU_095424_4_1_5"/>
<dbReference type="OrthoDB" id="9803474at2"/>
<dbReference type="Proteomes" id="UP000007029">
    <property type="component" value="Chromosome"/>
</dbReference>
<dbReference type="GO" id="GO:0022625">
    <property type="term" value="C:cytosolic large ribosomal subunit"/>
    <property type="evidence" value="ECO:0007669"/>
    <property type="project" value="TreeGrafter"/>
</dbReference>
<dbReference type="GO" id="GO:0003735">
    <property type="term" value="F:structural constituent of ribosome"/>
    <property type="evidence" value="ECO:0007669"/>
    <property type="project" value="InterPro"/>
</dbReference>
<dbReference type="GO" id="GO:0006412">
    <property type="term" value="P:translation"/>
    <property type="evidence" value="ECO:0007669"/>
    <property type="project" value="UniProtKB-UniRule"/>
</dbReference>
<dbReference type="FunFam" id="2.40.50.100:FF:000020">
    <property type="entry name" value="50S ribosomal protein L27"/>
    <property type="match status" value="1"/>
</dbReference>
<dbReference type="Gene3D" id="2.40.50.100">
    <property type="match status" value="1"/>
</dbReference>
<dbReference type="HAMAP" id="MF_00539">
    <property type="entry name" value="Ribosomal_bL27"/>
    <property type="match status" value="1"/>
</dbReference>
<dbReference type="InterPro" id="IPR001684">
    <property type="entry name" value="Ribosomal_bL27"/>
</dbReference>
<dbReference type="NCBIfam" id="TIGR00062">
    <property type="entry name" value="L27"/>
    <property type="match status" value="1"/>
</dbReference>
<dbReference type="PANTHER" id="PTHR15893:SF0">
    <property type="entry name" value="LARGE RIBOSOMAL SUBUNIT PROTEIN BL27M"/>
    <property type="match status" value="1"/>
</dbReference>
<dbReference type="PANTHER" id="PTHR15893">
    <property type="entry name" value="RIBOSOMAL PROTEIN L27"/>
    <property type="match status" value="1"/>
</dbReference>
<dbReference type="Pfam" id="PF01016">
    <property type="entry name" value="Ribosomal_L27"/>
    <property type="match status" value="1"/>
</dbReference>
<dbReference type="PRINTS" id="PR00063">
    <property type="entry name" value="RIBOSOMALL27"/>
</dbReference>
<dbReference type="SUPFAM" id="SSF110324">
    <property type="entry name" value="Ribosomal L27 protein-like"/>
    <property type="match status" value="1"/>
</dbReference>
<keyword id="KW-1185">Reference proteome</keyword>
<keyword id="KW-0687">Ribonucleoprotein</keyword>
<keyword id="KW-0689">Ribosomal protein</keyword>